<sequence length="1962" mass="227379">MALMSNKTAIESILGNFEKKHVDAIYNAAAQTILSHSEFRNKHFAYSLNSYQKKIASKVGIELYPNGYLPHSHPLSKIFENHLLFDVLPGVVNTSRLVMCSIKESKVLVFKGIRDKSRRQVSDLNALNSLNNSHTSFINRLVASKDVSRYTEEADAFFQSKKGSPELFSRNFIKSLENKEAVFFHDEVHHWTKAQMFSFLKSTKVKRFIFTVVYPPEILKKFANSQNPKVYDFKVDKGRLFFFPDGVKTEAYEQKLNMEWLFSASHLRSGDCVWTVTRHKSIYAHHLFEISIGELVTDSKLFFSDYNSIDMSKIFLDRFRSYEVFPISIEHLYKVYSYLLCLKKPDLESGLAKLRQIIGDDVEIKEFLFFEQFCKRLIERQTSWGLFGHSFFEKLTDMALSSLPNSIARIFPQWKKKNTFEFLFSLGTLVVDVERKVCFEHVLEEWGFEVVITDENAYLDPLSIFAINENFNEDRVDDGYLERIRLPFWNLNDYDLKRKRVNAYNILSYRFEEERKIESAQKGPNKMLQIEWYGIKEFKVDPFISNSITEFTLLEALLGKRIDPKKYSYSKQACTLSNYLTFLCAEGLDGFNLEEHLERRLKAAGHDVSDDEEEELTSAEQAGPIKILADPLGFMKECLEEIPIETEPSLEERGQFSTDYHSEKFEINYNDIFNPHNCMNTHGDEIPTPSDGNCFFSAFTETFEVERPDTLRSDFSDWLMEFNGGSYASLAEMIRPNGVFMEAELIYLFCVFRGVTLIIHDRTHEKENVYAVHRGFEEGHMVHRGNHFVGIETYNISTLTSDPLLGDIPCGFSEEITKFHFRPDHFNCAQFRGRKAAFITKVDADYGHNGMVYPHNSWVPSLEEIIQICGQGDDFNCALINFYEANSSLGFHRDNERVYNDDPILTVCTFGEGRFTIEFKDQVTSFLMTAGSFFLMPKGFQKKARHSVSNEMSRVSITFRKHVRRLNGSPIAIREENYKNTCLINAFSKAMKRSKQAIIAKLKTVNSPFWSRYLSEGNGGSIEDCQSACEALDVTVDLNVNGKCVVLGKGALRISMALRNNHFSVINAAQLMERTFVSHLLEKGNVNVLEGFDAMLSGDVGAAGVNKIQFAANFEFARILANSFLNMTTGICLGKALDNGEKYFLHILKDRVKQIGIDVTMVCGFAGSGKSRKLQSWLHSRKKGNFCVVSPRTNLAADWAFKLELEPNEQRKVSTFEKFIKTDKSKLDLIVIDELTLFPNGYLDLLVYELADVNRHCQIILLFDPLQARYHNKMDESILTFEHDVDRLIGGQNIEYIYSTHRMSRYFNRFFDVPCFNQADRTEEQRLWIFDDVYSIPSICSDRQEPCDVLLVESDLEKKAFSPIINVMTFGESQGLTFNHVCILLSESSAASNEFRWMVALTRARTRFSLCSTFLGGIEEFKVKRKESLITSILQGEKITFNRLNLMLKCNLIRREKENGCRDEVDREERLEGDPFLKPFIFLGQRVEKDEDEVEEVKIREPTCQTHLYITEPNFGLCYNFDFIREKEQREYREDMLVTNQFCDSYDKVHINGKRETPGPLRFKAIYPKHSADDDMTFWMAVRKRLVFREEEENYQRLSRAHLVGGLLYTNFKKKMGLEFTFDQGLLEESINAFEKKKLEKSCGTIKSHSIRSDIDWALNDVFLFMKSQLCTKYEKQFVDAKAGQTLACFQHLILVQFAPWCRYLETQIRNQLPEEIYIHSNKNFDDLNAWVKKFFQRDICVESDYEAFDASQDEYILSFEIHLMKDAHFPQKIIDAYIDLKCKLGCKLGHFSIMRFTGEFCTFLFNTLANMAFTMCRYEWRRGQPIAFAGDDMCALNNLAVCHDFDDLFELISLKAKVERTETPMFCGWRLTPYGIVKEPELVYNRFQVAIEEGKVLECLENYAIEVSYAYSLSERLYEVLKSERQVQYHQAVVRFIVTHIDKLKTKVRDLFLEQSSDEDI</sequence>
<keyword id="KW-0067">ATP-binding</keyword>
<keyword id="KW-0223">Dioxygenase</keyword>
<keyword id="KW-0347">Helicase</keyword>
<keyword id="KW-0378">Hydrolase</keyword>
<keyword id="KW-0408">Iron</keyword>
<keyword id="KW-0479">Metal-binding</keyword>
<keyword id="KW-0511">Multifunctional enzyme</keyword>
<keyword id="KW-0547">Nucleotide-binding</keyword>
<keyword id="KW-0548">Nucleotidyltransferase</keyword>
<keyword id="KW-0560">Oxidoreductase</keyword>
<keyword id="KW-0645">Protease</keyword>
<keyword id="KW-1185">Reference proteome</keyword>
<keyword id="KW-0696">RNA-directed RNA polymerase</keyword>
<keyword id="KW-0788">Thiol protease</keyword>
<keyword id="KW-0808">Transferase</keyword>
<keyword id="KW-0693">Viral RNA replication</keyword>
<reference key="1">
    <citation type="journal article" date="2001" name="Virology">
        <title>The nucleotide sequence and genomic organization of Citrus leaf blotch virus: candidate type species for a new virus genus.</title>
        <authorList>
            <person name="Vives M.C."/>
            <person name="Galipienso L."/>
            <person name="Navarro L."/>
            <person name="Moreno P."/>
            <person name="Guerri J."/>
        </authorList>
    </citation>
    <scope>NUCLEOTIDE SEQUENCE [GENOMIC RNA]</scope>
</reference>
<comment type="function">
    <text evidence="1">RNA replication polyprotein: RNA-directed RNA polymerase involved in viral RNA replication.</text>
</comment>
<comment type="function">
    <text evidence="1">Protease: Thiol protease that cleaves the polyprotein.</text>
</comment>
<comment type="catalytic activity">
    <reaction evidence="4">
        <text>RNA(n) + a ribonucleoside 5'-triphosphate = RNA(n+1) + diphosphate</text>
        <dbReference type="Rhea" id="RHEA:21248"/>
        <dbReference type="Rhea" id="RHEA-COMP:14527"/>
        <dbReference type="Rhea" id="RHEA-COMP:17342"/>
        <dbReference type="ChEBI" id="CHEBI:33019"/>
        <dbReference type="ChEBI" id="CHEBI:61557"/>
        <dbReference type="ChEBI" id="CHEBI:140395"/>
        <dbReference type="EC" id="2.7.7.48"/>
    </reaction>
</comment>
<comment type="catalytic activity">
    <reaction>
        <text>ATP + H2O = ADP + phosphate + H(+)</text>
        <dbReference type="Rhea" id="RHEA:13065"/>
        <dbReference type="ChEBI" id="CHEBI:15377"/>
        <dbReference type="ChEBI" id="CHEBI:15378"/>
        <dbReference type="ChEBI" id="CHEBI:30616"/>
        <dbReference type="ChEBI" id="CHEBI:43474"/>
        <dbReference type="ChEBI" id="CHEBI:456216"/>
        <dbReference type="EC" id="3.6.4.13"/>
    </reaction>
</comment>
<comment type="cofactor">
    <cofactor evidence="5">
        <name>Fe(2+)</name>
        <dbReference type="ChEBI" id="CHEBI:29033"/>
    </cofactor>
    <text evidence="5">Binds 1 Fe(2+) ion per subunit.</text>
</comment>
<comment type="PTM">
    <text evidence="1">Specific enzymatic cleavages by the viral protease yield mature proteins.</text>
</comment>
<organismHost>
    <name type="scientific">Citrus</name>
    <dbReference type="NCBI Taxonomy" id="2706"/>
</organismHost>
<feature type="chain" id="PRO_0000401088" description="RNA replication polyprotein">
    <location>
        <begin position="1"/>
        <end position="1962"/>
    </location>
</feature>
<feature type="domain" description="Alphavirus-like MT" evidence="8">
    <location>
        <begin position="64"/>
        <end position="261"/>
    </location>
</feature>
<feature type="domain" description="OTU" evidence="3">
    <location>
        <begin position="683"/>
        <end position="794"/>
    </location>
</feature>
<feature type="domain" description="Fe2OG dioxygenase" evidence="5">
    <location>
        <begin position="874"/>
        <end position="963"/>
    </location>
</feature>
<feature type="domain" description="Peptidase C23" evidence="6">
    <location>
        <begin position="978"/>
        <end position="1067"/>
    </location>
</feature>
<feature type="domain" description="(+)RNA virus helicase ATP-binding">
    <location>
        <begin position="1122"/>
        <end position="1297"/>
    </location>
</feature>
<feature type="domain" description="(+)RNA virus helicase C-terminal">
    <location>
        <begin position="1298"/>
        <end position="1445"/>
    </location>
</feature>
<feature type="domain" description="RdRp catalytic" evidence="4">
    <location>
        <begin position="1739"/>
        <end position="1846"/>
    </location>
</feature>
<feature type="active site" evidence="1">
    <location>
        <position position="982"/>
    </location>
</feature>
<feature type="active site" evidence="1">
    <location>
        <position position="1062"/>
    </location>
</feature>
<feature type="binding site" evidence="5">
    <location>
        <position position="892"/>
    </location>
    <ligand>
        <name>Fe cation</name>
        <dbReference type="ChEBI" id="CHEBI:24875"/>
    </ligand>
</feature>
<feature type="binding site" evidence="5">
    <location>
        <position position="894"/>
    </location>
    <ligand>
        <name>Fe cation</name>
        <dbReference type="ChEBI" id="CHEBI:24875"/>
    </ligand>
</feature>
<feature type="binding site" evidence="5">
    <location>
        <position position="946"/>
    </location>
    <ligand>
        <name>Fe cation</name>
        <dbReference type="ChEBI" id="CHEBI:24875"/>
    </ligand>
</feature>
<feature type="binding site" evidence="5">
    <location>
        <position position="954"/>
    </location>
    <ligand>
        <name>2-oxoglutarate</name>
        <dbReference type="ChEBI" id="CHEBI:16810"/>
    </ligand>
</feature>
<feature type="binding site" evidence="7">
    <location>
        <begin position="1164"/>
        <end position="1171"/>
    </location>
    <ligand>
        <name>ATP</name>
        <dbReference type="ChEBI" id="CHEBI:30616"/>
    </ligand>
</feature>
<gene>
    <name evidence="1" type="ORF">ORF1</name>
</gene>
<protein>
    <recommendedName>
        <fullName evidence="1">RNA replication polyprotein</fullName>
    </recommendedName>
    <alternativeName>
        <fullName evidence="1">ORF1 protein</fullName>
    </alternativeName>
    <domain>
        <recommendedName>
            <fullName evidence="2">Viral methyltransferase</fullName>
            <ecNumber evidence="9">2.1.1.-</ecNumber>
        </recommendedName>
    </domain>
    <domain>
        <recommendedName>
            <fullName evidence="2">Putative Fe(2+) 2-oxoglutarate dioxygenase</fullName>
            <ecNumber evidence="5">1.14.11.-</ecNumber>
        </recommendedName>
    </domain>
    <domain>
        <recommendedName>
            <fullName evidence="1">Protease</fullName>
            <ecNumber evidence="1">3.4.22.-</ecNumber>
        </recommendedName>
    </domain>
    <domain>
        <recommendedName>
            <fullName evidence="4">RNA-directed RNA polymerase</fullName>
            <ecNumber evidence="4">2.7.7.48</ecNumber>
        </recommendedName>
    </domain>
    <domain>
        <recommendedName>
            <fullName evidence="1">Helicase</fullName>
            <ecNumber evidence="9">3.6.4.13</ecNumber>
        </recommendedName>
    </domain>
</protein>
<accession>Q91QZ3</accession>
<proteinExistence type="inferred from homology"/>
<name>RDRP_CLBVS</name>
<evidence type="ECO:0000250" key="1">
    <source>
        <dbReference type="UniProtKB" id="Q65652"/>
    </source>
</evidence>
<evidence type="ECO:0000255" key="2"/>
<evidence type="ECO:0000255" key="3">
    <source>
        <dbReference type="PROSITE-ProRule" id="PRU00139"/>
    </source>
</evidence>
<evidence type="ECO:0000255" key="4">
    <source>
        <dbReference type="PROSITE-ProRule" id="PRU00539"/>
    </source>
</evidence>
<evidence type="ECO:0000255" key="5">
    <source>
        <dbReference type="PROSITE-ProRule" id="PRU00805"/>
    </source>
</evidence>
<evidence type="ECO:0000255" key="6">
    <source>
        <dbReference type="PROSITE-ProRule" id="PRU00825"/>
    </source>
</evidence>
<evidence type="ECO:0000255" key="7">
    <source>
        <dbReference type="PROSITE-ProRule" id="PRU00990"/>
    </source>
</evidence>
<evidence type="ECO:0000255" key="8">
    <source>
        <dbReference type="PROSITE-ProRule" id="PRU01079"/>
    </source>
</evidence>
<evidence type="ECO:0000305" key="9"/>
<organism>
    <name type="scientific">Citrus leaf blotch virus (isolate Nagami kumquat/France/SRA-153/1984)</name>
    <name type="common">CLBV</name>
    <dbReference type="NCBI Taxonomy" id="686981"/>
    <lineage>
        <taxon>Viruses</taxon>
        <taxon>Riboviria</taxon>
        <taxon>Orthornavirae</taxon>
        <taxon>Kitrinoviricota</taxon>
        <taxon>Alsuviricetes</taxon>
        <taxon>Tymovirales</taxon>
        <taxon>Betaflexiviridae</taxon>
        <taxon>Trivirinae</taxon>
        <taxon>Citrivirus</taxon>
        <taxon>Citrus leaf blotch virus</taxon>
    </lineage>
</organism>
<dbReference type="EC" id="2.1.1.-" evidence="9"/>
<dbReference type="EC" id="1.14.11.-" evidence="5"/>
<dbReference type="EC" id="3.4.22.-" evidence="1"/>
<dbReference type="EC" id="2.7.7.48" evidence="4"/>
<dbReference type="EC" id="3.6.4.13" evidence="9"/>
<dbReference type="EMBL" id="AJ318061">
    <property type="protein sequence ID" value="CAC39422.1"/>
    <property type="molecule type" value="Genomic_RNA"/>
</dbReference>
<dbReference type="RefSeq" id="NP_624333.1">
    <property type="nucleotide sequence ID" value="NC_003877.1"/>
</dbReference>
<dbReference type="KEGG" id="vg:944478"/>
<dbReference type="Proteomes" id="UP000006933">
    <property type="component" value="Segment"/>
</dbReference>
<dbReference type="GO" id="GO:0005524">
    <property type="term" value="F:ATP binding"/>
    <property type="evidence" value="ECO:0007669"/>
    <property type="project" value="UniProtKB-KW"/>
</dbReference>
<dbReference type="GO" id="GO:0016887">
    <property type="term" value="F:ATP hydrolysis activity"/>
    <property type="evidence" value="ECO:0007669"/>
    <property type="project" value="RHEA"/>
</dbReference>
<dbReference type="GO" id="GO:0008234">
    <property type="term" value="F:cysteine-type peptidase activity"/>
    <property type="evidence" value="ECO:0007669"/>
    <property type="project" value="UniProtKB-KW"/>
</dbReference>
<dbReference type="GO" id="GO:0051213">
    <property type="term" value="F:dioxygenase activity"/>
    <property type="evidence" value="ECO:0007669"/>
    <property type="project" value="UniProtKB-KW"/>
</dbReference>
<dbReference type="GO" id="GO:0046872">
    <property type="term" value="F:metal ion binding"/>
    <property type="evidence" value="ECO:0007669"/>
    <property type="project" value="UniProtKB-KW"/>
</dbReference>
<dbReference type="GO" id="GO:0008174">
    <property type="term" value="F:mRNA methyltransferase activity"/>
    <property type="evidence" value="ECO:0007669"/>
    <property type="project" value="InterPro"/>
</dbReference>
<dbReference type="GO" id="GO:0003723">
    <property type="term" value="F:RNA binding"/>
    <property type="evidence" value="ECO:0007669"/>
    <property type="project" value="InterPro"/>
</dbReference>
<dbReference type="GO" id="GO:0003724">
    <property type="term" value="F:RNA helicase activity"/>
    <property type="evidence" value="ECO:0007669"/>
    <property type="project" value="UniProtKB-EC"/>
</dbReference>
<dbReference type="GO" id="GO:0003968">
    <property type="term" value="F:RNA-directed RNA polymerase activity"/>
    <property type="evidence" value="ECO:0007669"/>
    <property type="project" value="UniProtKB-KW"/>
</dbReference>
<dbReference type="GO" id="GO:0006351">
    <property type="term" value="P:DNA-templated transcription"/>
    <property type="evidence" value="ECO:0007669"/>
    <property type="project" value="InterPro"/>
</dbReference>
<dbReference type="GO" id="GO:0016556">
    <property type="term" value="P:mRNA modification"/>
    <property type="evidence" value="ECO:0007669"/>
    <property type="project" value="InterPro"/>
</dbReference>
<dbReference type="GO" id="GO:0006508">
    <property type="term" value="P:proteolysis"/>
    <property type="evidence" value="ECO:0007669"/>
    <property type="project" value="UniProtKB-KW"/>
</dbReference>
<dbReference type="GO" id="GO:0006396">
    <property type="term" value="P:RNA processing"/>
    <property type="evidence" value="ECO:0007669"/>
    <property type="project" value="InterPro"/>
</dbReference>
<dbReference type="GO" id="GO:0039694">
    <property type="term" value="P:viral RNA genome replication"/>
    <property type="evidence" value="ECO:0007669"/>
    <property type="project" value="InterPro"/>
</dbReference>
<dbReference type="CDD" id="cd23245">
    <property type="entry name" value="Betaflexiviridae_RdRp"/>
    <property type="match status" value="1"/>
</dbReference>
<dbReference type="Gene3D" id="2.60.120.590">
    <property type="entry name" value="Alpha-ketoglutarate-dependent dioxygenase AlkB-like"/>
    <property type="match status" value="1"/>
</dbReference>
<dbReference type="Gene3D" id="3.40.50.300">
    <property type="entry name" value="P-loop containing nucleotide triphosphate hydrolases"/>
    <property type="match status" value="1"/>
</dbReference>
<dbReference type="InterPro" id="IPR027351">
    <property type="entry name" value="(+)RNA_virus_helicase_core_dom"/>
</dbReference>
<dbReference type="InterPro" id="IPR037151">
    <property type="entry name" value="AlkB-like_sf"/>
</dbReference>
<dbReference type="InterPro" id="IPR002588">
    <property type="entry name" value="Alphavirus-like_MT_dom"/>
</dbReference>
<dbReference type="InterPro" id="IPR043502">
    <property type="entry name" value="DNA/RNA_pol_sf"/>
</dbReference>
<dbReference type="InterPro" id="IPR044861">
    <property type="entry name" value="IPNS-like_FE2OG_OXY"/>
</dbReference>
<dbReference type="InterPro" id="IPR003323">
    <property type="entry name" value="OTU_dom"/>
</dbReference>
<dbReference type="InterPro" id="IPR005123">
    <property type="entry name" value="Oxoglu/Fe-dep_dioxygenase_dom"/>
</dbReference>
<dbReference type="InterPro" id="IPR027417">
    <property type="entry name" value="P-loop_NTPase"/>
</dbReference>
<dbReference type="InterPro" id="IPR008041">
    <property type="entry name" value="Peptidase_C23"/>
</dbReference>
<dbReference type="InterPro" id="IPR001788">
    <property type="entry name" value="RNA-dep_RNA_pol_alsuvir"/>
</dbReference>
<dbReference type="InterPro" id="IPR007094">
    <property type="entry name" value="RNA-dir_pol_PSvirus"/>
</dbReference>
<dbReference type="Pfam" id="PF03171">
    <property type="entry name" value="2OG-FeII_Oxy"/>
    <property type="match status" value="1"/>
</dbReference>
<dbReference type="Pfam" id="PF05379">
    <property type="entry name" value="Peptidase_C23"/>
    <property type="match status" value="1"/>
</dbReference>
<dbReference type="Pfam" id="PF00978">
    <property type="entry name" value="RdRP_2"/>
    <property type="match status" value="1"/>
</dbReference>
<dbReference type="Pfam" id="PF01443">
    <property type="entry name" value="Viral_helicase1"/>
    <property type="match status" value="1"/>
</dbReference>
<dbReference type="Pfam" id="PF01660">
    <property type="entry name" value="Vmethyltransf"/>
    <property type="match status" value="1"/>
</dbReference>
<dbReference type="SUPFAM" id="SSF51197">
    <property type="entry name" value="Clavaminate synthase-like"/>
    <property type="match status" value="1"/>
</dbReference>
<dbReference type="SUPFAM" id="SSF56672">
    <property type="entry name" value="DNA/RNA polymerases"/>
    <property type="match status" value="1"/>
</dbReference>
<dbReference type="SUPFAM" id="SSF52540">
    <property type="entry name" value="P-loop containing nucleoside triphosphate hydrolases"/>
    <property type="match status" value="1"/>
</dbReference>
<dbReference type="PROSITE" id="PS51743">
    <property type="entry name" value="ALPHAVIRUS_MT"/>
    <property type="match status" value="1"/>
</dbReference>
<dbReference type="PROSITE" id="PS51471">
    <property type="entry name" value="FE2OG_OXY"/>
    <property type="match status" value="1"/>
</dbReference>
<dbReference type="PROSITE" id="PS50802">
    <property type="entry name" value="OTU"/>
    <property type="match status" value="1"/>
</dbReference>
<dbReference type="PROSITE" id="PS51492">
    <property type="entry name" value="PEPTIDASE_C23"/>
    <property type="match status" value="1"/>
</dbReference>
<dbReference type="PROSITE" id="PS51657">
    <property type="entry name" value="PSRV_HELICASE"/>
    <property type="match status" value="1"/>
</dbReference>
<dbReference type="PROSITE" id="PS50507">
    <property type="entry name" value="RDRP_SSRNA_POS"/>
    <property type="match status" value="1"/>
</dbReference>